<comment type="function">
    <text evidence="1">Catalyzes the condensation of iminoaspartate with dihydroxyacetone phosphate to form quinolinate.</text>
</comment>
<comment type="catalytic activity">
    <reaction evidence="1">
        <text>iminosuccinate + dihydroxyacetone phosphate = quinolinate + phosphate + 2 H2O + H(+)</text>
        <dbReference type="Rhea" id="RHEA:25888"/>
        <dbReference type="ChEBI" id="CHEBI:15377"/>
        <dbReference type="ChEBI" id="CHEBI:15378"/>
        <dbReference type="ChEBI" id="CHEBI:29959"/>
        <dbReference type="ChEBI" id="CHEBI:43474"/>
        <dbReference type="ChEBI" id="CHEBI:57642"/>
        <dbReference type="ChEBI" id="CHEBI:77875"/>
        <dbReference type="EC" id="2.5.1.72"/>
    </reaction>
    <physiologicalReaction direction="left-to-right" evidence="1">
        <dbReference type="Rhea" id="RHEA:25889"/>
    </physiologicalReaction>
</comment>
<comment type="cofactor">
    <cofactor evidence="1">
        <name>[4Fe-4S] cluster</name>
        <dbReference type="ChEBI" id="CHEBI:49883"/>
    </cofactor>
    <text evidence="1">Binds 1 [4Fe-4S] cluster per subunit.</text>
</comment>
<comment type="pathway">
    <text evidence="1">Cofactor biosynthesis; NAD(+) biosynthesis; quinolinate from iminoaspartate: step 1/1.</text>
</comment>
<comment type="subcellular location">
    <subcellularLocation>
        <location evidence="1">Cytoplasm</location>
    </subcellularLocation>
</comment>
<comment type="similarity">
    <text evidence="1">Belongs to the quinolinate synthase family. Type 3 subfamily.</text>
</comment>
<dbReference type="EC" id="2.5.1.72" evidence="1"/>
<dbReference type="EMBL" id="CP000509">
    <property type="protein sequence ID" value="ABL82651.1"/>
    <property type="molecule type" value="Genomic_DNA"/>
</dbReference>
<dbReference type="SMR" id="A1SLG6"/>
<dbReference type="STRING" id="196162.Noca_3149"/>
<dbReference type="KEGG" id="nca:Noca_3149"/>
<dbReference type="eggNOG" id="COG0379">
    <property type="taxonomic scope" value="Bacteria"/>
</dbReference>
<dbReference type="HOGENOM" id="CLU_047382_2_0_11"/>
<dbReference type="UniPathway" id="UPA00253">
    <property type="reaction ID" value="UER00327"/>
</dbReference>
<dbReference type="Proteomes" id="UP000000640">
    <property type="component" value="Chromosome"/>
</dbReference>
<dbReference type="GO" id="GO:0005829">
    <property type="term" value="C:cytosol"/>
    <property type="evidence" value="ECO:0007669"/>
    <property type="project" value="TreeGrafter"/>
</dbReference>
<dbReference type="GO" id="GO:0051539">
    <property type="term" value="F:4 iron, 4 sulfur cluster binding"/>
    <property type="evidence" value="ECO:0007669"/>
    <property type="project" value="UniProtKB-KW"/>
</dbReference>
<dbReference type="GO" id="GO:0046872">
    <property type="term" value="F:metal ion binding"/>
    <property type="evidence" value="ECO:0007669"/>
    <property type="project" value="UniProtKB-KW"/>
</dbReference>
<dbReference type="GO" id="GO:0008987">
    <property type="term" value="F:quinolinate synthetase A activity"/>
    <property type="evidence" value="ECO:0007669"/>
    <property type="project" value="UniProtKB-UniRule"/>
</dbReference>
<dbReference type="GO" id="GO:0034628">
    <property type="term" value="P:'de novo' NAD biosynthetic process from L-aspartate"/>
    <property type="evidence" value="ECO:0007669"/>
    <property type="project" value="TreeGrafter"/>
</dbReference>
<dbReference type="Gene3D" id="3.40.50.10800">
    <property type="entry name" value="NadA-like"/>
    <property type="match status" value="3"/>
</dbReference>
<dbReference type="HAMAP" id="MF_00569">
    <property type="entry name" value="NadA_type3"/>
    <property type="match status" value="1"/>
</dbReference>
<dbReference type="InterPro" id="IPR003473">
    <property type="entry name" value="NadA"/>
</dbReference>
<dbReference type="InterPro" id="IPR036094">
    <property type="entry name" value="NadA_sf"/>
</dbReference>
<dbReference type="InterPro" id="IPR023515">
    <property type="entry name" value="Quinolinate_synth_A_type3"/>
</dbReference>
<dbReference type="NCBIfam" id="TIGR00550">
    <property type="entry name" value="nadA"/>
    <property type="match status" value="1"/>
</dbReference>
<dbReference type="NCBIfam" id="NF006881">
    <property type="entry name" value="PRK09375.2-2"/>
    <property type="match status" value="1"/>
</dbReference>
<dbReference type="NCBIfam" id="NF006883">
    <property type="entry name" value="PRK09375.2-4"/>
    <property type="match status" value="1"/>
</dbReference>
<dbReference type="PANTHER" id="PTHR30573:SF0">
    <property type="entry name" value="QUINOLINATE SYNTHASE, CHLOROPLASTIC"/>
    <property type="match status" value="1"/>
</dbReference>
<dbReference type="PANTHER" id="PTHR30573">
    <property type="entry name" value="QUINOLINATE SYNTHETASE A"/>
    <property type="match status" value="1"/>
</dbReference>
<dbReference type="Pfam" id="PF02445">
    <property type="entry name" value="NadA"/>
    <property type="match status" value="1"/>
</dbReference>
<dbReference type="SUPFAM" id="SSF142754">
    <property type="entry name" value="NadA-like"/>
    <property type="match status" value="1"/>
</dbReference>
<feature type="chain" id="PRO_1000082322" description="Quinolinate synthase">
    <location>
        <begin position="1"/>
        <end position="394"/>
    </location>
</feature>
<feature type="binding site" evidence="1">
    <location>
        <position position="57"/>
    </location>
    <ligand>
        <name>iminosuccinate</name>
        <dbReference type="ChEBI" id="CHEBI:77875"/>
    </ligand>
</feature>
<feature type="binding site" evidence="1">
    <location>
        <position position="74"/>
    </location>
    <ligand>
        <name>iminosuccinate</name>
        <dbReference type="ChEBI" id="CHEBI:77875"/>
    </ligand>
</feature>
<feature type="binding site" evidence="1">
    <location>
        <position position="121"/>
    </location>
    <ligand>
        <name>[4Fe-4S] cluster</name>
        <dbReference type="ChEBI" id="CHEBI:49883"/>
    </ligand>
</feature>
<feature type="binding site" evidence="1">
    <location>
        <begin position="153"/>
        <end position="155"/>
    </location>
    <ligand>
        <name>iminosuccinate</name>
        <dbReference type="ChEBI" id="CHEBI:77875"/>
    </ligand>
</feature>
<feature type="binding site" evidence="1">
    <location>
        <position position="174"/>
    </location>
    <ligand>
        <name>iminosuccinate</name>
        <dbReference type="ChEBI" id="CHEBI:77875"/>
    </ligand>
</feature>
<feature type="binding site" evidence="1">
    <location>
        <position position="250"/>
    </location>
    <ligand>
        <name>[4Fe-4S] cluster</name>
        <dbReference type="ChEBI" id="CHEBI:49883"/>
    </ligand>
</feature>
<feature type="binding site" evidence="1">
    <location>
        <begin position="276"/>
        <end position="278"/>
    </location>
    <ligand>
        <name>iminosuccinate</name>
        <dbReference type="ChEBI" id="CHEBI:77875"/>
    </ligand>
</feature>
<feature type="binding site" evidence="1">
    <location>
        <position position="293"/>
    </location>
    <ligand>
        <name>iminosuccinate</name>
        <dbReference type="ChEBI" id="CHEBI:77875"/>
    </ligand>
</feature>
<feature type="binding site" evidence="1">
    <location>
        <position position="340"/>
    </location>
    <ligand>
        <name>[4Fe-4S] cluster</name>
        <dbReference type="ChEBI" id="CHEBI:49883"/>
    </ligand>
</feature>
<accession>A1SLG6</accession>
<evidence type="ECO:0000255" key="1">
    <source>
        <dbReference type="HAMAP-Rule" id="MF_00569"/>
    </source>
</evidence>
<sequence>MTIADLPLLPLGRGTDLTSERGVECPGDLPPASDPALVERARAAKAALGDRVFVLGHHYQRDEVIQFADVTGDSFKLAREAAARPDAEYIVFCGVHFMAESADILTGPSQQVILPDLAAGCSMADMARLTQVEMAWDALAAAGVADSVVPVTYMNSSADIKAFCGRNGGLVCTSSNAEVALEWAFEQKGGVEGDAKILFLPDQHLGRNTAVLKMGLSVDDCVVWDPFRPGGGLTPEQLRAAKVILWRGHCSVHGKFSPDVVDELRATIPGVQILVHPECTHELVLKADLVGSTEFIIKTIEAAPSGSSWSIGTELNLVKRLSAAHPDKNISFLDKTVCYCSTMNRIDLPHLVWALESLVAGTVVNRIEVDPETETWALLALERMLALPGKSHKD</sequence>
<organism>
    <name type="scientific">Nocardioides sp. (strain ATCC BAA-499 / JS614)</name>
    <dbReference type="NCBI Taxonomy" id="196162"/>
    <lineage>
        <taxon>Bacteria</taxon>
        <taxon>Bacillati</taxon>
        <taxon>Actinomycetota</taxon>
        <taxon>Actinomycetes</taxon>
        <taxon>Propionibacteriales</taxon>
        <taxon>Nocardioidaceae</taxon>
        <taxon>Nocardioides</taxon>
    </lineage>
</organism>
<proteinExistence type="inferred from homology"/>
<keyword id="KW-0004">4Fe-4S</keyword>
<keyword id="KW-0963">Cytoplasm</keyword>
<keyword id="KW-0408">Iron</keyword>
<keyword id="KW-0411">Iron-sulfur</keyword>
<keyword id="KW-0479">Metal-binding</keyword>
<keyword id="KW-0662">Pyridine nucleotide biosynthesis</keyword>
<keyword id="KW-1185">Reference proteome</keyword>
<keyword id="KW-0808">Transferase</keyword>
<name>NADA_NOCSJ</name>
<gene>
    <name evidence="1" type="primary">nadA</name>
    <name type="ordered locus">Noca_3149</name>
</gene>
<reference key="1">
    <citation type="submission" date="2006-12" db="EMBL/GenBank/DDBJ databases">
        <title>Complete sequence of chromosome 1 of Nocardioides sp. JS614.</title>
        <authorList>
            <person name="Copeland A."/>
            <person name="Lucas S."/>
            <person name="Lapidus A."/>
            <person name="Barry K."/>
            <person name="Detter J.C."/>
            <person name="Glavina del Rio T."/>
            <person name="Hammon N."/>
            <person name="Israni S."/>
            <person name="Dalin E."/>
            <person name="Tice H."/>
            <person name="Pitluck S."/>
            <person name="Thompson L.S."/>
            <person name="Brettin T."/>
            <person name="Bruce D."/>
            <person name="Han C."/>
            <person name="Tapia R."/>
            <person name="Schmutz J."/>
            <person name="Larimer F."/>
            <person name="Land M."/>
            <person name="Hauser L."/>
            <person name="Kyrpides N."/>
            <person name="Kim E."/>
            <person name="Mattes T."/>
            <person name="Gossett J."/>
            <person name="Richardson P."/>
        </authorList>
    </citation>
    <scope>NUCLEOTIDE SEQUENCE [LARGE SCALE GENOMIC DNA]</scope>
    <source>
        <strain>ATCC BAA-499 / JS614</strain>
    </source>
</reference>
<protein>
    <recommendedName>
        <fullName evidence="1">Quinolinate synthase</fullName>
        <ecNumber evidence="1">2.5.1.72</ecNumber>
    </recommendedName>
</protein>